<proteinExistence type="inferred from homology"/>
<keyword id="KW-1185">Reference proteome</keyword>
<gene>
    <name type="primary">U8</name>
    <name type="synonym">SFL1</name>
</gene>
<comment type="similarity">
    <text evidence="1">Belongs to the herpesviridae US22 family.</text>
</comment>
<protein>
    <recommendedName>
        <fullName>Protein U8</fullName>
    </recommendedName>
</protein>
<sequence>MDLEAKEISGNIPNENALAELCRLCESADLSQIENFVGRYKNWCLSIIWPRNCWLRFTPRKDVAGYTEKMFEDMDDHYQGFVEKLCLLGTIQIPYRDVPILIGRSKRIFLHDLETDTLHFVCDNFEQFVRYGVLGTNIITCAEPVYRHGLYEGPRFESLENLMNNDVLRSPYTLNVHVKLNRKGVLGIKAMRKHYIAMLREFDELARCASLDDVGRFVSLNVGRDLRLDMPVFKSLTLGTRDSVWTGTCRLANLKEQEDLVEKVVVLGYLNDHDYESKCTRPILCIGKSGKIYYYDWIDNVLVKLGDCLLTFLRVGFARLFADYGYEKIGKISMRFGRMSTLGMSETYQSCMSLSK</sequence>
<evidence type="ECO:0000305" key="1"/>
<organismHost>
    <name type="scientific">Homo sapiens</name>
    <name type="common">Human</name>
    <dbReference type="NCBI Taxonomy" id="9606"/>
</organismHost>
<name>U8_HHV6U</name>
<dbReference type="EMBL" id="D10082">
    <property type="protein sequence ID" value="BAA00980.1"/>
    <property type="molecule type" value="Genomic_DNA"/>
</dbReference>
<dbReference type="EMBL" id="X83413">
    <property type="status" value="NOT_ANNOTATED_CDS"/>
    <property type="molecule type" value="Genomic_DNA"/>
</dbReference>
<dbReference type="PIR" id="JQ1652">
    <property type="entry name" value="JQ1652"/>
</dbReference>
<dbReference type="Proteomes" id="UP000009295">
    <property type="component" value="Segment"/>
</dbReference>
<dbReference type="InterPro" id="IPR003360">
    <property type="entry name" value="US22-like"/>
</dbReference>
<dbReference type="Pfam" id="PF02393">
    <property type="entry name" value="US22"/>
    <property type="match status" value="2"/>
</dbReference>
<reference key="1">
    <citation type="journal article" date="1992" name="J. Gen. Virol.">
        <title>Identification of homologues to the human cytomegalovirus US22 gene family in human herpesvirus 6.</title>
        <authorList>
            <person name="Efstathiou S."/>
            <person name="Lawrence G.L."/>
            <person name="Brown C.M."/>
            <person name="Barrell B.G."/>
        </authorList>
    </citation>
    <scope>NUCLEOTIDE SEQUENCE [GENOMIC DNA]</scope>
</reference>
<reference key="2">
    <citation type="journal article" date="1995" name="Virology">
        <title>The DNA sequence of human herpesvirus-6: structure, coding content, and genome evolution.</title>
        <authorList>
            <person name="Gompels U.A."/>
            <person name="Nicholas J."/>
            <person name="Lawrence G.L."/>
            <person name="Jones M."/>
            <person name="Thomson B.J."/>
            <person name="Martin M.E.D."/>
            <person name="Efstathiou S."/>
            <person name="Craxton M.A."/>
            <person name="Macaulay H.A."/>
        </authorList>
    </citation>
    <scope>NUCLEOTIDE SEQUENCE [LARGE SCALE GENOMIC DNA]</scope>
</reference>
<accession>Q01346</accession>
<organism>
    <name type="scientific">Human herpesvirus 6A (strain Uganda-1102)</name>
    <name type="common">HHV-6 variant A</name>
    <name type="synonym">Human B lymphotropic virus</name>
    <dbReference type="NCBI Taxonomy" id="10370"/>
    <lineage>
        <taxon>Viruses</taxon>
        <taxon>Duplodnaviria</taxon>
        <taxon>Heunggongvirae</taxon>
        <taxon>Peploviricota</taxon>
        <taxon>Herviviricetes</taxon>
        <taxon>Herpesvirales</taxon>
        <taxon>Orthoherpesviridae</taxon>
        <taxon>Betaherpesvirinae</taxon>
        <taxon>Roseolovirus</taxon>
        <taxon>Roseolovirus humanbeta6a</taxon>
        <taxon>Human betaherpesvirus 6A</taxon>
    </lineage>
</organism>
<feature type="chain" id="PRO_0000116315" description="Protein U8">
    <location>
        <begin position="1"/>
        <end position="356"/>
    </location>
</feature>